<keyword id="KW-0002">3D-structure</keyword>
<keyword id="KW-0007">Acetylation</keyword>
<keyword id="KW-0025">Alternative splicing</keyword>
<keyword id="KW-0963">Cytoplasm</keyword>
<keyword id="KW-0479">Metal-binding</keyword>
<keyword id="KW-0488">Methylation</keyword>
<keyword id="KW-0914">Notch signaling pathway</keyword>
<keyword id="KW-0539">Nucleus</keyword>
<keyword id="KW-0597">Phosphoprotein</keyword>
<keyword id="KW-1267">Proteomics identification</keyword>
<keyword id="KW-1185">Reference proteome</keyword>
<keyword id="KW-0677">Repeat</keyword>
<keyword id="KW-0808">Transferase</keyword>
<keyword id="KW-0833">Ubl conjugation pathway</keyword>
<keyword id="KW-0862">Zinc</keyword>
<keyword id="KW-0863">Zinc-finger</keyword>
<feature type="chain" id="PRO_0000219083" description="Probable E3 ubiquitin-protein ligase DTX2">
    <location>
        <begin position="1"/>
        <end position="622"/>
    </location>
</feature>
<feature type="domain" description="WWE 1" evidence="4">
    <location>
        <begin position="8"/>
        <end position="97"/>
    </location>
</feature>
<feature type="domain" description="WWE 2" evidence="4">
    <location>
        <begin position="98"/>
        <end position="174"/>
    </location>
</feature>
<feature type="zinc finger region" description="RING-type" evidence="3">
    <location>
        <begin position="412"/>
        <end position="473"/>
    </location>
</feature>
<feature type="region of interest" description="Disordered" evidence="5">
    <location>
        <begin position="249"/>
        <end position="324"/>
    </location>
</feature>
<feature type="region of interest" description="Disordered" evidence="5">
    <location>
        <begin position="355"/>
        <end position="393"/>
    </location>
</feature>
<feature type="compositionally biased region" description="Polar residues" evidence="5">
    <location>
        <begin position="274"/>
        <end position="285"/>
    </location>
</feature>
<feature type="compositionally biased region" description="Low complexity" evidence="5">
    <location>
        <begin position="299"/>
        <end position="322"/>
    </location>
</feature>
<feature type="compositionally biased region" description="Basic residues" evidence="5">
    <location>
        <begin position="372"/>
        <end position="381"/>
    </location>
</feature>
<feature type="modified residue" description="Asymmetric dimethylarginine" evidence="15">
    <location>
        <position position="213"/>
    </location>
</feature>
<feature type="modified residue" description="Asymmetric dimethylarginine" evidence="15">
    <location>
        <position position="215"/>
    </location>
</feature>
<feature type="modified residue" description="Asymmetric dimethylarginine" evidence="15">
    <location>
        <position position="233"/>
    </location>
</feature>
<feature type="modified residue" description="N6-acetyllysine" evidence="14">
    <location>
        <position position="249"/>
    </location>
</feature>
<feature type="modified residue" description="Omega-N-methylarginine" evidence="15">
    <location>
        <position position="256"/>
    </location>
</feature>
<feature type="modified residue" description="Phosphoserine" evidence="13">
    <location>
        <position position="360"/>
    </location>
</feature>
<feature type="splice variant" id="VSP_008350" description="In isoform 2." evidence="12">
    <location>
        <begin position="337"/>
        <end position="383"/>
    </location>
</feature>
<feature type="sequence variant" id="VAR_016920" description="In dbSNP:rs2462312.">
    <original>A</original>
    <variation>T</variation>
    <location>
        <position position="94"/>
    </location>
</feature>
<feature type="sequence variant" id="VAR_016921" description="In dbSNP:rs1638152." evidence="6 8 10">
    <original>G</original>
    <variation>E</variation>
    <location>
        <position position="384"/>
    </location>
</feature>
<feature type="sequence variant" id="VAR_016922" description="In dbSNP:rs6979487." evidence="6 9 11">
    <original>T</original>
    <variation>A</variation>
    <location>
        <position position="421"/>
    </location>
</feature>
<feature type="helix" evidence="18">
    <location>
        <begin position="393"/>
        <end position="399"/>
    </location>
</feature>
<feature type="strand" evidence="18">
    <location>
        <begin position="401"/>
        <end position="403"/>
    </location>
</feature>
<feature type="strand" evidence="17">
    <location>
        <begin position="409"/>
        <end position="411"/>
    </location>
</feature>
<feature type="turn" evidence="18">
    <location>
        <begin position="413"/>
        <end position="415"/>
    </location>
</feature>
<feature type="turn" evidence="16">
    <location>
        <begin position="419"/>
        <end position="421"/>
    </location>
</feature>
<feature type="turn" evidence="18">
    <location>
        <begin position="424"/>
        <end position="428"/>
    </location>
</feature>
<feature type="strand" evidence="18">
    <location>
        <begin position="439"/>
        <end position="442"/>
    </location>
</feature>
<feature type="turn" evidence="18">
    <location>
        <begin position="443"/>
        <end position="445"/>
    </location>
</feature>
<feature type="strand" evidence="18">
    <location>
        <begin position="448"/>
        <end position="450"/>
    </location>
</feature>
<feature type="helix" evidence="18">
    <location>
        <begin position="451"/>
        <end position="457"/>
    </location>
</feature>
<feature type="turn" evidence="16">
    <location>
        <begin position="458"/>
        <end position="460"/>
    </location>
</feature>
<feature type="strand" evidence="16">
    <location>
        <begin position="464"/>
        <end position="466"/>
    </location>
</feature>
<feature type="turn" evidence="18">
    <location>
        <begin position="470"/>
        <end position="472"/>
    </location>
</feature>
<feature type="strand" evidence="18">
    <location>
        <begin position="475"/>
        <end position="477"/>
    </location>
</feature>
<feature type="strand" evidence="18">
    <location>
        <begin position="487"/>
        <end position="494"/>
    </location>
</feature>
<feature type="strand" evidence="18">
    <location>
        <begin position="505"/>
        <end position="511"/>
    </location>
</feature>
<feature type="strand" evidence="18">
    <location>
        <begin position="521"/>
        <end position="523"/>
    </location>
</feature>
<feature type="strand" evidence="18">
    <location>
        <begin position="526"/>
        <end position="529"/>
    </location>
</feature>
<feature type="strand" evidence="18">
    <location>
        <begin position="534"/>
        <end position="542"/>
    </location>
</feature>
<feature type="helix" evidence="18">
    <location>
        <begin position="543"/>
        <end position="557"/>
    </location>
</feature>
<feature type="strand" evidence="18">
    <location>
        <begin position="561"/>
        <end position="565"/>
    </location>
</feature>
<feature type="turn" evidence="18">
    <location>
        <begin position="568"/>
        <end position="570"/>
    </location>
</feature>
<feature type="strand" evidence="18">
    <location>
        <begin position="573"/>
        <end position="578"/>
    </location>
</feature>
<feature type="turn" evidence="18">
    <location>
        <begin position="589"/>
        <end position="592"/>
    </location>
</feature>
<feature type="helix" evidence="18">
    <location>
        <begin position="601"/>
        <end position="611"/>
    </location>
</feature>
<feature type="helix" evidence="18">
    <location>
        <begin position="616"/>
        <end position="619"/>
    </location>
</feature>
<comment type="function">
    <text>Regulator of Notch signaling, a signaling pathway involved in cell-cell communications that regulates a broad spectrum of cell-fate determinations. Probably acts both as a positive and negative regulator of Notch, depending on the developmental and cell context. Mediates the antineural activity of Notch, possibly by inhibiting the transcriptional activation mediated by MATCH1. Functions as a ubiquitin ligase protein in vitro, suggesting that it may regulate the Notch pathway via some ubiquitin ligase activity.</text>
</comment>
<comment type="catalytic activity">
    <reaction evidence="2">
        <text>S-ubiquitinyl-[E2 ubiquitin-conjugating enzyme]-L-cysteine + [acceptor protein]-L-lysine = [E2 ubiquitin-conjugating enzyme]-L-cysteine + N(6)-ubiquitinyl-[acceptor protein]-L-lysine.</text>
        <dbReference type="EC" id="2.3.2.27"/>
    </reaction>
</comment>
<comment type="pathway">
    <text>Protein modification; protein ubiquitination.</text>
</comment>
<comment type="subunit">
    <text evidence="2">Homodimer. May form a heterodimer with other members of the Deltex family. Interacts with NOTCH1.</text>
</comment>
<comment type="interaction">
    <interactant intactId="EBI-740376">
        <id>Q86UW9</id>
    </interactant>
    <interactant intactId="EBI-12318443">
        <id>Q8NFV4-4</id>
        <label>ABHD11</label>
    </interactant>
    <organismsDiffer>false</organismsDiffer>
    <experiments>3</experiments>
</comment>
<comment type="interaction">
    <interactant intactId="EBI-740376">
        <id>Q86UW9</id>
    </interactant>
    <interactant intactId="EBI-348517">
        <id>O95870</id>
        <label>ABHD16A</label>
    </interactant>
    <organismsDiffer>false</organismsDiffer>
    <experiments>7</experiments>
</comment>
<comment type="interaction">
    <interactant intactId="EBI-740376">
        <id>Q86UW9</id>
    </interactant>
    <interactant intactId="EBI-11976299">
        <id>Q5BKX5-3</id>
        <label>ACTMAP</label>
    </interactant>
    <organismsDiffer>false</organismsDiffer>
    <experiments>3</experiments>
</comment>
<comment type="interaction">
    <interactant intactId="EBI-740376">
        <id>Q86UW9</id>
    </interactant>
    <interactant intactId="EBI-8637516">
        <id>Q9NXW9</id>
        <label>ALKBH4</label>
    </interactant>
    <organismsDiffer>false</organismsDiffer>
    <experiments>11</experiments>
</comment>
<comment type="interaction">
    <interactant intactId="EBI-740376">
        <id>Q86UW9</id>
    </interactant>
    <interactant intactId="EBI-12224467">
        <id>Q9NYG5-2</id>
        <label>ANAPC11</label>
    </interactant>
    <organismsDiffer>false</organismsDiffer>
    <experiments>3</experiments>
</comment>
<comment type="interaction">
    <interactant intactId="EBI-740376">
        <id>Q86UW9</id>
    </interactant>
    <interactant intactId="EBI-713602">
        <id>Q9BQD7</id>
        <label>ANTKMT</label>
    </interactant>
    <organismsDiffer>false</organismsDiffer>
    <experiments>3</experiments>
</comment>
<comment type="interaction">
    <interactant intactId="EBI-740376">
        <id>Q86UW9</id>
    </interactant>
    <interactant intactId="EBI-948603">
        <id>Q03989</id>
        <label>ARID5A</label>
    </interactant>
    <organismsDiffer>false</organismsDiffer>
    <experiments>3</experiments>
</comment>
<comment type="interaction">
    <interactant intactId="EBI-740376">
        <id>Q86UW9</id>
    </interactant>
    <interactant intactId="EBI-742909">
        <id>Q9H6L4</id>
        <label>ARMC7</label>
    </interactant>
    <organismsDiffer>false</organismsDiffer>
    <experiments>3</experiments>
</comment>
<comment type="interaction">
    <interactant intactId="EBI-740376">
        <id>Q86UW9</id>
    </interactant>
    <interactant intactId="EBI-765971">
        <id>Q9HBZ2</id>
        <label>ARNT2</label>
    </interactant>
    <organismsDiffer>false</organismsDiffer>
    <experiments>4</experiments>
</comment>
<comment type="interaction">
    <interactant intactId="EBI-740376">
        <id>Q86UW9</id>
    </interactant>
    <interactant intactId="EBI-526406">
        <id>O43521</id>
        <label>BCL2L11</label>
    </interactant>
    <organismsDiffer>false</organismsDiffer>
    <experiments>3</experiments>
</comment>
<comment type="interaction">
    <interactant intactId="EBI-740376">
        <id>Q86UW9</id>
    </interactant>
    <interactant intactId="EBI-1012434">
        <id>Q6AI39</id>
        <label>BICRAL</label>
    </interactant>
    <organismsDiffer>false</organismsDiffer>
    <experiments>3</experiments>
</comment>
<comment type="interaction">
    <interactant intactId="EBI-740376">
        <id>Q86UW9</id>
    </interactant>
    <interactant intactId="EBI-12906362">
        <id>A0A0B4J295</id>
        <label>BOLA2-SMG1P6</label>
    </interactant>
    <organismsDiffer>false</organismsDiffer>
    <experiments>3</experiments>
</comment>
<comment type="interaction">
    <interactant intactId="EBI-740376">
        <id>Q86UW9</id>
    </interactant>
    <interactant intactId="EBI-12809220">
        <id>Q5SWW7</id>
        <label>C10orf55</label>
    </interactant>
    <organismsDiffer>false</organismsDiffer>
    <experiments>3</experiments>
</comment>
<comment type="interaction">
    <interactant intactId="EBI-740376">
        <id>Q86UW9</id>
    </interactant>
    <interactant intactId="EBI-946029">
        <id>Q6P1W5</id>
        <label>C1orf94</label>
    </interactant>
    <organismsDiffer>false</organismsDiffer>
    <experiments>3</experiments>
</comment>
<comment type="interaction">
    <interactant intactId="EBI-740376">
        <id>Q86UW9</id>
    </interactant>
    <interactant intactId="EBI-7317823">
        <id>Q6P5X5</id>
        <label>C22orf39</label>
    </interactant>
    <organismsDiffer>false</organismsDiffer>
    <experiments>5</experiments>
</comment>
<comment type="interaction">
    <interactant intactId="EBI-740376">
        <id>Q86UW9</id>
    </interactant>
    <interactant intactId="EBI-10961624">
        <id>Q2TAC2-2</id>
        <label>CCDC57</label>
    </interactant>
    <organismsDiffer>false</organismsDiffer>
    <experiments>3</experiments>
</comment>
<comment type="interaction">
    <interactant intactId="EBI-740376">
        <id>Q86UW9</id>
    </interactant>
    <interactant intactId="EBI-718615">
        <id>Q9H5F2</id>
        <label>CFAP68</label>
    </interactant>
    <organismsDiffer>false</organismsDiffer>
    <experiments>3</experiments>
</comment>
<comment type="interaction">
    <interactant intactId="EBI-740376">
        <id>Q86UW9</id>
    </interactant>
    <interactant intactId="EBI-12155483">
        <id>Q9H1P6</id>
        <label>CIMIP1</label>
    </interactant>
    <organismsDiffer>false</organismsDiffer>
    <experiments>3</experiments>
</comment>
<comment type="interaction">
    <interactant intactId="EBI-740376">
        <id>Q86UW9</id>
    </interactant>
    <interactant intactId="EBI-1056029">
        <id>Q16740</id>
        <label>CLPP</label>
    </interactant>
    <organismsDiffer>false</organismsDiffer>
    <experiments>5</experiments>
</comment>
<comment type="interaction">
    <interactant intactId="EBI-740376">
        <id>Q86UW9</id>
    </interactant>
    <interactant intactId="EBI-2874677">
        <id>Q5JTJ3</id>
        <label>COA6</label>
    </interactant>
    <organismsDiffer>false</organismsDiffer>
    <experiments>3</experiments>
</comment>
<comment type="interaction">
    <interactant intactId="EBI-740376">
        <id>Q86UW9</id>
    </interactant>
    <interactant intactId="EBI-745535">
        <id>Q8NI60</id>
        <label>COQ8A</label>
    </interactant>
    <organismsDiffer>false</organismsDiffer>
    <experiments>3</experiments>
</comment>
<comment type="interaction">
    <interactant intactId="EBI-740376">
        <id>Q86UW9</id>
    </interactant>
    <interactant intactId="EBI-724310">
        <id>Q15038</id>
        <label>DAZAP2</label>
    </interactant>
    <organismsDiffer>false</organismsDiffer>
    <experiments>3</experiments>
</comment>
<comment type="interaction">
    <interactant intactId="EBI-740376">
        <id>Q86UW9</id>
    </interactant>
    <interactant intactId="EBI-10694655">
        <id>Q7L591-3</id>
        <label>DOK3</label>
    </interactant>
    <organismsDiffer>false</organismsDiffer>
    <experiments>3</experiments>
</comment>
<comment type="interaction">
    <interactant intactId="EBI-740376">
        <id>Q86UW9</id>
    </interactant>
    <interactant intactId="EBI-947964">
        <id>Q16610</id>
        <label>ECM1</label>
    </interactant>
    <organismsDiffer>false</organismsDiffer>
    <experiments>3</experiments>
</comment>
<comment type="interaction">
    <interactant intactId="EBI-740376">
        <id>Q86UW9</id>
    </interactant>
    <interactant intactId="EBI-712452">
        <id>Q9BQ95</id>
        <label>ECSIT</label>
    </interactant>
    <organismsDiffer>false</organismsDiffer>
    <experiments>3</experiments>
</comment>
<comment type="interaction">
    <interactant intactId="EBI-740376">
        <id>Q86UW9</id>
    </interactant>
    <interactant intactId="EBI-301024">
        <id>Q9NRA8</id>
        <label>EIF4ENIF1</label>
    </interactant>
    <organismsDiffer>false</organismsDiffer>
    <experiments>7</experiments>
</comment>
<comment type="interaction">
    <interactant intactId="EBI-740376">
        <id>Q86UW9</id>
    </interactant>
    <interactant intactId="EBI-12012124">
        <id>Q04637-9</id>
        <label>EIF4G1</label>
    </interactant>
    <organismsDiffer>false</organismsDiffer>
    <experiments>3</experiments>
</comment>
<comment type="interaction">
    <interactant intactId="EBI-740376">
        <id>Q86UW9</id>
    </interactant>
    <interactant intactId="EBI-12807776">
        <id>O00167-2</id>
        <label>EYA2</label>
    </interactant>
    <organismsDiffer>false</organismsDiffer>
    <experiments>3</experiments>
</comment>
<comment type="interaction">
    <interactant intactId="EBI-740376">
        <id>Q86UW9</id>
    </interactant>
    <interactant intactId="EBI-7957930">
        <id>Q92567</id>
        <label>FAM168A</label>
    </interactant>
    <organismsDiffer>false</organismsDiffer>
    <experiments>6</experiments>
</comment>
<comment type="interaction">
    <interactant intactId="EBI-740376">
        <id>Q86UW9</id>
    </interactant>
    <interactant intactId="EBI-11978259">
        <id>Q92567-2</id>
        <label>FAM168A</label>
    </interactant>
    <organismsDiffer>false</organismsDiffer>
    <experiments>3</experiments>
</comment>
<comment type="interaction">
    <interactant intactId="EBI-740376">
        <id>Q86UW9</id>
    </interactant>
    <interactant intactId="EBI-4314687">
        <id>Q96PJ5</id>
        <label>FCRL4</label>
    </interactant>
    <organismsDiffer>false</organismsDiffer>
    <experiments>3</experiments>
</comment>
<comment type="interaction">
    <interactant intactId="EBI-740376">
        <id>Q86UW9</id>
    </interactant>
    <interactant intactId="EBI-701903">
        <id>Q14192</id>
        <label>FHL2</label>
    </interactant>
    <organismsDiffer>false</organismsDiffer>
    <experiments>6</experiments>
</comment>
<comment type="interaction">
    <interactant intactId="EBI-740376">
        <id>Q86UW9</id>
    </interactant>
    <interactant intactId="EBI-750641">
        <id>Q5TD97</id>
        <label>FHL5</label>
    </interactant>
    <organismsDiffer>false</organismsDiffer>
    <experiments>3</experiments>
</comment>
<comment type="interaction">
    <interactant intactId="EBI-740376">
        <id>Q86UW9</id>
    </interactant>
    <interactant intactId="EBI-12018822">
        <id>Q12951-2</id>
        <label>FOXI1</label>
    </interactant>
    <organismsDiffer>false</organismsDiffer>
    <experiments>3</experiments>
</comment>
<comment type="interaction">
    <interactant intactId="EBI-740376">
        <id>Q86UW9</id>
    </interactant>
    <interactant intactId="EBI-18138793">
        <id>Q9C0B1-2</id>
        <label>FTO</label>
    </interactant>
    <organismsDiffer>false</organismsDiffer>
    <experiments>3</experiments>
</comment>
<comment type="interaction">
    <interactant intactId="EBI-740376">
        <id>Q86UW9</id>
    </interactant>
    <interactant intactId="EBI-748515">
        <id>Q8IVS8</id>
        <label>GLYCTK</label>
    </interactant>
    <organismsDiffer>false</organismsDiffer>
    <experiments>6</experiments>
</comment>
<comment type="interaction">
    <interactant intactId="EBI-740376">
        <id>Q86UW9</id>
    </interactant>
    <interactant intactId="EBI-618309">
        <id>Q08379</id>
        <label>GOLGA2</label>
    </interactant>
    <organismsDiffer>false</organismsDiffer>
    <experiments>3</experiments>
</comment>
<comment type="interaction">
    <interactant intactId="EBI-740376">
        <id>Q86UW9</id>
    </interactant>
    <interactant intactId="EBI-10200283">
        <id>P19113</id>
        <label>HDC</label>
    </interactant>
    <organismsDiffer>false</organismsDiffer>
    <experiments>6</experiments>
</comment>
<comment type="interaction">
    <interactant intactId="EBI-740376">
        <id>Q86UW9</id>
    </interactant>
    <interactant intactId="EBI-740220">
        <id>O14964</id>
        <label>HGS</label>
    </interactant>
    <organismsDiffer>false</organismsDiffer>
    <experiments>3</experiments>
</comment>
<comment type="interaction">
    <interactant intactId="EBI-740376">
        <id>Q86UW9</id>
    </interactant>
    <interactant intactId="EBI-6678255">
        <id>Q14774</id>
        <label>HLX</label>
    </interactant>
    <organismsDiffer>false</organismsDiffer>
    <experiments>3</experiments>
</comment>
<comment type="interaction">
    <interactant intactId="EBI-740376">
        <id>Q86UW9</id>
    </interactant>
    <interactant intactId="EBI-740785">
        <id>P49639</id>
        <label>HOXA1</label>
    </interactant>
    <organismsDiffer>false</organismsDiffer>
    <experiments>6</experiments>
</comment>
<comment type="interaction">
    <interactant intactId="EBI-740376">
        <id>Q86UW9</id>
    </interactant>
    <interactant intactId="EBI-5329558">
        <id>P14652</id>
        <label>HOXB2</label>
    </interactant>
    <organismsDiffer>false</organismsDiffer>
    <experiments>3</experiments>
</comment>
<comment type="interaction">
    <interactant intactId="EBI-740376">
        <id>Q86UW9</id>
    </interactant>
    <interactant intactId="EBI-17244356">
        <id>P35452-2</id>
        <label>HOXD12</label>
    </interactant>
    <organismsDiffer>false</organismsDiffer>
    <experiments>3</experiments>
</comment>
<comment type="interaction">
    <interactant intactId="EBI-740376">
        <id>Q86UW9</id>
    </interactant>
    <interactant intactId="EBI-12197079">
        <id>P84074</id>
        <label>HPCA</label>
    </interactant>
    <organismsDiffer>false</organismsDiffer>
    <experiments>5</experiments>
</comment>
<comment type="interaction">
    <interactant intactId="EBI-740376">
        <id>Q86UW9</id>
    </interactant>
    <interactant intactId="EBI-749311">
        <id>P37235</id>
        <label>HPCAL1</label>
    </interactant>
    <organismsDiffer>false</organismsDiffer>
    <experiments>4</experiments>
</comment>
<comment type="interaction">
    <interactant intactId="EBI-740376">
        <id>Q86UW9</id>
    </interactant>
    <interactant intactId="EBI-744820">
        <id>Q9UM19</id>
        <label>HPCAL4</label>
    </interactant>
    <organismsDiffer>false</organismsDiffer>
    <experiments>7</experiments>
</comment>
<comment type="interaction">
    <interactant intactId="EBI-740376">
        <id>Q86UW9</id>
    </interactant>
    <interactant intactId="EBI-3957665">
        <id>Q96LI6</id>
        <label>HSFY2</label>
    </interactant>
    <organismsDiffer>false</organismsDiffer>
    <experiments>3</experiments>
</comment>
<comment type="interaction">
    <interactant intactId="EBI-740376">
        <id>Q86UW9</id>
    </interactant>
    <interactant intactId="EBI-747204">
        <id>Q9UKT9</id>
        <label>IKZF3</label>
    </interactant>
    <organismsDiffer>false</organismsDiffer>
    <experiments>3</experiments>
</comment>
<comment type="interaction">
    <interactant intactId="EBI-740376">
        <id>Q86UW9</id>
    </interactant>
    <interactant intactId="EBI-2556193">
        <id>Q63ZY3</id>
        <label>KANK2</label>
    </interactant>
    <organismsDiffer>false</organismsDiffer>
    <experiments>3</experiments>
</comment>
<comment type="interaction">
    <interactant intactId="EBI-740376">
        <id>Q86UW9</id>
    </interactant>
    <interactant intactId="EBI-1643885">
        <id>Q6P597</id>
        <label>KLC3</label>
    </interactant>
    <organismsDiffer>false</organismsDiffer>
    <experiments>6</experiments>
</comment>
<comment type="interaction">
    <interactant intactId="EBI-740376">
        <id>Q86UW9</id>
    </interactant>
    <interactant intactId="EBI-9478422">
        <id>Q96G42</id>
        <label>KLHDC7B</label>
    </interactant>
    <organismsDiffer>false</organismsDiffer>
    <experiments>3</experiments>
</comment>
<comment type="interaction">
    <interactant intactId="EBI-740376">
        <id>Q86UW9</id>
    </interactant>
    <interactant intactId="EBI-1052037">
        <id>Q8IUC1</id>
        <label>KRTAP11-1</label>
    </interactant>
    <organismsDiffer>false</organismsDiffer>
    <experiments>3</experiments>
</comment>
<comment type="interaction">
    <interactant intactId="EBI-740376">
        <id>Q86UW9</id>
    </interactant>
    <interactant intactId="EBI-10241252">
        <id>Q3SY46</id>
        <label>KRTAP13-3</label>
    </interactant>
    <organismsDiffer>false</organismsDiffer>
    <experiments>3</experiments>
</comment>
<comment type="interaction">
    <interactant intactId="EBI-740376">
        <id>Q86UW9</id>
    </interactant>
    <interactant intactId="EBI-11992140">
        <id>Q3LI76</id>
        <label>KRTAP15-1</label>
    </interactant>
    <organismsDiffer>false</organismsDiffer>
    <experiments>3</experiments>
</comment>
<comment type="interaction">
    <interactant intactId="EBI-740376">
        <id>Q86UW9</id>
    </interactant>
    <interactant intactId="EBI-12811111">
        <id>Q8IUB9</id>
        <label>KRTAP19-1</label>
    </interactant>
    <organismsDiffer>false</organismsDiffer>
    <experiments>3</experiments>
</comment>
<comment type="interaction">
    <interactant intactId="EBI-740376">
        <id>Q86UW9</id>
    </interactant>
    <interactant intactId="EBI-12805508">
        <id>Q3LI70</id>
        <label>KRTAP19-6</label>
    </interactant>
    <organismsDiffer>false</organismsDiffer>
    <experiments>3</experiments>
</comment>
<comment type="interaction">
    <interactant intactId="EBI-740376">
        <id>Q86UW9</id>
    </interactant>
    <interactant intactId="EBI-10241353">
        <id>Q3SYF9</id>
        <label>KRTAP19-7</label>
    </interactant>
    <organismsDiffer>false</organismsDiffer>
    <experiments>3</experiments>
</comment>
<comment type="interaction">
    <interactant intactId="EBI-740376">
        <id>Q86UW9</id>
    </interactant>
    <interactant intactId="EBI-3957672">
        <id>Q6PEX3</id>
        <label>KRTAP26-1</label>
    </interactant>
    <organismsDiffer>false</organismsDiffer>
    <experiments>3</experiments>
</comment>
<comment type="interaction">
    <interactant intactId="EBI-740376">
        <id>Q86UW9</id>
    </interactant>
    <interactant intactId="EBI-12111050">
        <id>Q3LI64</id>
        <label>KRTAP6-1</label>
    </interactant>
    <organismsDiffer>false</organismsDiffer>
    <experiments>3</experiments>
</comment>
<comment type="interaction">
    <interactant intactId="EBI-740376">
        <id>Q86UW9</id>
    </interactant>
    <interactant intactId="EBI-18394498">
        <id>Q8IUC3</id>
        <label>KRTAP7-1</label>
    </interactant>
    <organismsDiffer>false</organismsDiffer>
    <experiments>3</experiments>
</comment>
<comment type="interaction">
    <interactant intactId="EBI-740376">
        <id>Q86UW9</id>
    </interactant>
    <interactant intactId="EBI-10261141">
        <id>Q8IUC2</id>
        <label>KRTAP8-1</label>
    </interactant>
    <organismsDiffer>false</organismsDiffer>
    <experiments>3</experiments>
</comment>
<comment type="interaction">
    <interactant intactId="EBI-740376">
        <id>Q86UW9</id>
    </interactant>
    <interactant intactId="EBI-9088686">
        <id>Q14847-2</id>
        <label>LASP1</label>
    </interactant>
    <organismsDiffer>false</organismsDiffer>
    <experiments>3</experiments>
</comment>
<comment type="interaction">
    <interactant intactId="EBI-740376">
        <id>Q86UW9</id>
    </interactant>
    <interactant intactId="EBI-739832">
        <id>Q8TBB1</id>
        <label>LNX1</label>
    </interactant>
    <organismsDiffer>false</organismsDiffer>
    <experiments>3</experiments>
</comment>
<comment type="interaction">
    <interactant intactId="EBI-740376">
        <id>Q86UW9</id>
    </interactant>
    <interactant intactId="EBI-18273118">
        <id>Q9P2M1</id>
        <label>LRP2BP</label>
    </interactant>
    <organismsDiffer>false</organismsDiffer>
    <experiments>3</experiments>
</comment>
<comment type="interaction">
    <interactant intactId="EBI-740376">
        <id>Q86UW9</id>
    </interactant>
    <interactant intactId="EBI-12516603">
        <id>Q8WWY6</id>
        <label>MBD3L1</label>
    </interactant>
    <organismsDiffer>false</organismsDiffer>
    <experiments>3</experiments>
</comment>
<comment type="interaction">
    <interactant intactId="EBI-740376">
        <id>Q86UW9</id>
    </interactant>
    <interactant intactId="EBI-13288755">
        <id>A0JLT2-2</id>
        <label>MED19</label>
    </interactant>
    <organismsDiffer>false</organismsDiffer>
    <experiments>3</experiments>
</comment>
<comment type="interaction">
    <interactant intactId="EBI-740376">
        <id>Q86UW9</id>
    </interactant>
    <interactant intactId="EBI-11599933">
        <id>Q4VC12</id>
        <label>MSS51</label>
    </interactant>
    <organismsDiffer>false</organismsDiffer>
    <experiments>3</experiments>
</comment>
<comment type="interaction">
    <interactant intactId="EBI-740376">
        <id>Q86UW9</id>
    </interactant>
    <interactant intactId="EBI-2816254">
        <id>Q14764</id>
        <label>MVP</label>
    </interactant>
    <organismsDiffer>false</organismsDiffer>
    <experiments>3</experiments>
</comment>
<comment type="interaction">
    <interactant intactId="EBI-740376">
        <id>Q86UW9</id>
    </interactant>
    <interactant intactId="EBI-11721798">
        <id>Q9BRK3</id>
        <label>MXRA8</label>
    </interactant>
    <organismsDiffer>false</organismsDiffer>
    <experiments>3</experiments>
</comment>
<comment type="interaction">
    <interactant intactId="EBI-740376">
        <id>Q86UW9</id>
    </interactant>
    <interactant intactId="EBI-749635">
        <id>P61601</id>
        <label>NCALD</label>
    </interactant>
    <organismsDiffer>false</organismsDiffer>
    <experiments>12</experiments>
</comment>
<comment type="interaction">
    <interactant intactId="EBI-740376">
        <id>Q86UW9</id>
    </interactant>
    <interactant intactId="EBI-746987">
        <id>P62166</id>
        <label>NCS1</label>
    </interactant>
    <organismsDiffer>false</organismsDiffer>
    <experiments>13</experiments>
</comment>
<comment type="interaction">
    <interactant intactId="EBI-740376">
        <id>Q86UW9</id>
    </interactant>
    <interactant intactId="EBI-12868744">
        <id>P0CG21</id>
        <label>NHLRC4</label>
    </interactant>
    <organismsDiffer>false</organismsDiffer>
    <experiments>3</experiments>
</comment>
<comment type="interaction">
    <interactant intactId="EBI-740376">
        <id>Q86UW9</id>
    </interactant>
    <interactant intactId="EBI-740897">
        <id>Q9GZT8</id>
        <label>NIF3L1</label>
    </interactant>
    <organismsDiffer>false</organismsDiffer>
    <experiments>3</experiments>
</comment>
<comment type="interaction">
    <interactant intactId="EBI-740376">
        <id>Q86UW9</id>
    </interactant>
    <interactant intactId="EBI-744871">
        <id>O00746</id>
        <label>NME4</label>
    </interactant>
    <organismsDiffer>false</organismsDiffer>
    <experiments>3</experiments>
</comment>
<comment type="interaction">
    <interactant intactId="EBI-740376">
        <id>Q86UW9</id>
    </interactant>
    <interactant intactId="EBI-536879">
        <id>O43482</id>
        <label>OIP5</label>
    </interactant>
    <organismsDiffer>false</organismsDiffer>
    <experiments>3</experiments>
</comment>
<comment type="interaction">
    <interactant intactId="EBI-740376">
        <id>Q86UW9</id>
    </interactant>
    <interactant intactId="EBI-296331">
        <id>Q02548</id>
        <label>PAX5</label>
    </interactant>
    <organismsDiffer>false</organismsDiffer>
    <experiments>3</experiments>
</comment>
<comment type="interaction">
    <interactant intactId="EBI-740376">
        <id>Q86UW9</id>
    </interactant>
    <interactant intactId="EBI-742388">
        <id>Q9H8W4</id>
        <label>PLEKHF2</label>
    </interactant>
    <organismsDiffer>false</organismsDiffer>
    <experiments>3</experiments>
</comment>
<comment type="interaction">
    <interactant intactId="EBI-740376">
        <id>Q86UW9</id>
    </interactant>
    <interactant intactId="EBI-949255">
        <id>Q58EX7</id>
        <label>PLEKHG4</label>
    </interactant>
    <organismsDiffer>false</organismsDiffer>
    <experiments>3</experiments>
</comment>
<comment type="interaction">
    <interactant intactId="EBI-740376">
        <id>Q86UW9</id>
    </interactant>
    <interactant intactId="EBI-1389308">
        <id>Q7Z3K3</id>
        <label>POGZ</label>
    </interactant>
    <organismsDiffer>false</organismsDiffer>
    <experiments>3</experiments>
</comment>
<comment type="interaction">
    <interactant intactId="EBI-740376">
        <id>Q86UW9</id>
    </interactant>
    <interactant intactId="EBI-18587059">
        <id>B1ATL7</id>
        <label>PRR32</label>
    </interactant>
    <organismsDiffer>false</organismsDiffer>
    <experiments>3</experiments>
</comment>
<comment type="interaction">
    <interactant intactId="EBI-740376">
        <id>Q86UW9</id>
    </interactant>
    <interactant intactId="EBI-11959565">
        <id>Q9NV39</id>
        <label>PRR34</label>
    </interactant>
    <organismsDiffer>false</organismsDiffer>
    <experiments>3</experiments>
</comment>
<comment type="interaction">
    <interactant intactId="EBI-740376">
        <id>Q86UW9</id>
    </interactant>
    <interactant intactId="EBI-603350">
        <id>P28070</id>
        <label>PSMB4</label>
    </interactant>
    <organismsDiffer>false</organismsDiffer>
    <experiments>3</experiments>
</comment>
<comment type="interaction">
    <interactant intactId="EBI-740376">
        <id>Q86UW9</id>
    </interactant>
    <interactant intactId="EBI-10209725">
        <id>P47897-2</id>
        <label>QARS1</label>
    </interactant>
    <organismsDiffer>false</organismsDiffer>
    <experiments>3</experiments>
</comment>
<comment type="interaction">
    <interactant intactId="EBI-740376">
        <id>Q86UW9</id>
    </interactant>
    <interactant intactId="EBI-741332">
        <id>P57052</id>
        <label>RBM11</label>
    </interactant>
    <organismsDiffer>false</organismsDiffer>
    <experiments>3</experiments>
</comment>
<comment type="interaction">
    <interactant intactId="EBI-740376">
        <id>Q86UW9</id>
    </interactant>
    <interactant intactId="EBI-740322">
        <id>Q93062</id>
        <label>RBPMS</label>
    </interactant>
    <organismsDiffer>false</organismsDiffer>
    <experiments>7</experiments>
</comment>
<comment type="interaction">
    <interactant intactId="EBI-740376">
        <id>Q86UW9</id>
    </interactant>
    <interactant intactId="EBI-746118">
        <id>Q8HWS3</id>
        <label>RFX6</label>
    </interactant>
    <organismsDiffer>false</organismsDiffer>
    <experiments>4</experiments>
</comment>
<comment type="interaction">
    <interactant intactId="EBI-740376">
        <id>Q86UW9</id>
    </interactant>
    <interactant intactId="EBI-10182375">
        <id>Q9UFD9</id>
        <label>RIMBP3</label>
    </interactant>
    <organismsDiffer>false</organismsDiffer>
    <experiments>3</experiments>
</comment>
<comment type="interaction">
    <interactant intactId="EBI-740376">
        <id>Q86UW9</id>
    </interactant>
    <interactant intactId="EBI-6257312">
        <id>Q9BVN2</id>
        <label>RUSC1</label>
    </interactant>
    <organismsDiffer>false</organismsDiffer>
    <experiments>3</experiments>
</comment>
<comment type="interaction">
    <interactant intactId="EBI-740376">
        <id>Q86UW9</id>
    </interactant>
    <interactant intactId="EBI-12000762">
        <id>Q7Z5V6-2</id>
        <label>SAXO4</label>
    </interactant>
    <organismsDiffer>false</organismsDiffer>
    <experiments>3</experiments>
</comment>
<comment type="interaction">
    <interactant intactId="EBI-740376">
        <id>Q86UW9</id>
    </interactant>
    <interactant intactId="EBI-8652744">
        <id>Q96IW7</id>
        <label>SEC22A</label>
    </interactant>
    <organismsDiffer>false</organismsDiffer>
    <experiments>10</experiments>
</comment>
<comment type="interaction">
    <interactant intactId="EBI-740376">
        <id>Q86UW9</id>
    </interactant>
    <interactant intactId="EBI-81088">
        <id>Q15436</id>
        <label>SEC23A</label>
    </interactant>
    <organismsDiffer>false</organismsDiffer>
    <experiments>3</experiments>
</comment>
<comment type="interaction">
    <interactant intactId="EBI-740376">
        <id>Q86UW9</id>
    </interactant>
    <interactant intactId="EBI-742673">
        <id>Q15437</id>
        <label>SEC23B</label>
    </interactant>
    <organismsDiffer>false</organismsDiffer>
    <experiments>6</experiments>
</comment>
<comment type="interaction">
    <interactant intactId="EBI-740376">
        <id>Q86UW9</id>
    </interactant>
    <interactant intactId="EBI-12190001">
        <id>Q9HD40-3</id>
        <label>SEPSECS</label>
    </interactant>
    <organismsDiffer>false</organismsDiffer>
    <experiments>3</experiments>
</comment>
<comment type="interaction">
    <interactant intactId="EBI-740376">
        <id>Q86UW9</id>
    </interactant>
    <interactant intactId="EBI-12829638">
        <id>Q8N1D0-2</id>
        <label>SLC22A18AS</label>
    </interactant>
    <organismsDiffer>false</organismsDiffer>
    <experiments>3</experiments>
</comment>
<comment type="interaction">
    <interactant intactId="EBI-740376">
        <id>Q86UW9</id>
    </interactant>
    <interactant intactId="EBI-12288855">
        <id>Q5JUK2</id>
        <label>SOHLH1</label>
    </interactant>
    <organismsDiffer>false</organismsDiffer>
    <experiments>3</experiments>
</comment>
<comment type="interaction">
    <interactant intactId="EBI-740376">
        <id>Q86UW9</id>
    </interactant>
    <interactant intactId="EBI-954419">
        <id>Q99932</id>
        <label>SPAG8</label>
    </interactant>
    <organismsDiffer>false</organismsDiffer>
    <experiments>3</experiments>
</comment>
<comment type="interaction">
    <interactant intactId="EBI-740376">
        <id>Q86UW9</id>
    </interactant>
    <interactant intactId="EBI-742688">
        <id>Q9NZD8</id>
        <label>SPG21</label>
    </interactant>
    <organismsDiffer>false</organismsDiffer>
    <experiments>7</experiments>
</comment>
<comment type="interaction">
    <interactant intactId="EBI-740376">
        <id>Q86UW9</id>
    </interactant>
    <interactant intactId="EBI-2691717">
        <id>Q86Y82</id>
        <label>STX12</label>
    </interactant>
    <organismsDiffer>false</organismsDiffer>
    <experiments>7</experiments>
</comment>
<comment type="interaction">
    <interactant intactId="EBI-740376">
        <id>Q86UW9</id>
    </interactant>
    <interactant intactId="EBI-80140">
        <id>P63165</id>
        <label>SUMO1</label>
    </interactant>
    <organismsDiffer>false</organismsDiffer>
    <experiments>3</experiments>
</comment>
<comment type="interaction">
    <interactant intactId="EBI-740376">
        <id>Q86UW9</id>
    </interactant>
    <interactant intactId="EBI-10191361">
        <id>Q96SF7</id>
        <label>TBX15</label>
    </interactant>
    <organismsDiffer>false</organismsDiffer>
    <experiments>3</experiments>
</comment>
<comment type="interaction">
    <interactant intactId="EBI-740376">
        <id>Q86UW9</id>
    </interactant>
    <interactant intactId="EBI-10239812">
        <id>Q96M29</id>
        <label>TEKT5</label>
    </interactant>
    <organismsDiffer>false</organismsDiffer>
    <experiments>3</experiments>
</comment>
<comment type="interaction">
    <interactant intactId="EBI-740376">
        <id>Q86UW9</id>
    </interactant>
    <interactant intactId="EBI-2802204">
        <id>Q6PIY7</id>
        <label>TENT2</label>
    </interactant>
    <organismsDiffer>false</organismsDiffer>
    <experiments>3</experiments>
</comment>
<comment type="interaction">
    <interactant intactId="EBI-740376">
        <id>Q86UW9</id>
    </interactant>
    <interactant intactId="EBI-12038591">
        <id>Q69YG0</id>
        <label>TMEM42</label>
    </interactant>
    <organismsDiffer>false</organismsDiffer>
    <experiments>3</experiments>
</comment>
<comment type="interaction">
    <interactant intactId="EBI-740376">
        <id>Q86UW9</id>
    </interactant>
    <interactant intactId="EBI-492476">
        <id>Q96RU7</id>
        <label>TRIB3</label>
    </interactant>
    <organismsDiffer>false</organismsDiffer>
    <experiments>3</experiments>
</comment>
<comment type="interaction">
    <interactant intactId="EBI-740376">
        <id>Q86UW9</id>
    </interactant>
    <interactant intactId="EBI-17716262">
        <id>Q9UPQ4-2</id>
        <label>TRIM35</label>
    </interactant>
    <organismsDiffer>false</organismsDiffer>
    <experiments>3</experiments>
</comment>
<comment type="interaction">
    <interactant intactId="EBI-740376">
        <id>Q86UW9</id>
    </interactant>
    <interactant intactId="EBI-2130429">
        <id>Q9BYV2</id>
        <label>TRIM54</label>
    </interactant>
    <organismsDiffer>false</organismsDiffer>
    <experiments>9</experiments>
</comment>
<comment type="interaction">
    <interactant intactId="EBI-740376">
        <id>Q86UW9</id>
    </interactant>
    <interactant intactId="EBI-742327">
        <id>Q15654</id>
        <label>TRIP6</label>
    </interactant>
    <organismsDiffer>false</organismsDiffer>
    <experiments>3</experiments>
</comment>
<comment type="interaction">
    <interactant intactId="EBI-740376">
        <id>Q86UW9</id>
    </interactant>
    <interactant intactId="EBI-743540">
        <id>P51668</id>
        <label>UBE2D1</label>
    </interactant>
    <organismsDiffer>false</organismsDiffer>
    <experiments>7</experiments>
</comment>
<comment type="interaction">
    <interactant intactId="EBI-740376">
        <id>Q86UW9</id>
    </interactant>
    <interactant intactId="EBI-347677">
        <id>P62837</id>
        <label>UBE2D2</label>
    </interactant>
    <organismsDiffer>false</organismsDiffer>
    <experiments>3</experiments>
</comment>
<comment type="interaction">
    <interactant intactId="EBI-740376">
        <id>Q86UW9</id>
    </interactant>
    <interactant intactId="EBI-348268">
        <id>P61077</id>
        <label>UBE2D3</label>
    </interactant>
    <organismsDiffer>false</organismsDiffer>
    <experiments>9</experiments>
</comment>
<comment type="interaction">
    <interactant intactId="EBI-740376">
        <id>Q86UW9</id>
    </interactant>
    <interactant intactId="EBI-745527">
        <id>Q9Y2X8</id>
        <label>UBE2D4</label>
    </interactant>
    <organismsDiffer>false</organismsDiffer>
    <experiments>13</experiments>
</comment>
<comment type="interaction">
    <interactant intactId="EBI-740376">
        <id>Q86UW9</id>
    </interactant>
    <interactant intactId="EBI-11975223">
        <id>Q70EL1-9</id>
        <label>USP54</label>
    </interactant>
    <organismsDiffer>false</organismsDiffer>
    <experiments>3</experiments>
</comment>
<comment type="interaction">
    <interactant intactId="EBI-740376">
        <id>Q86UW9</id>
    </interactant>
    <interactant intactId="EBI-11957216">
        <id>A8MV65-2</id>
        <label>VGLL3</label>
    </interactant>
    <organismsDiffer>false</organismsDiffer>
    <experiments>3</experiments>
</comment>
<comment type="interaction">
    <interactant intactId="EBI-740376">
        <id>Q86UW9</id>
    </interactant>
    <interactant intactId="EBI-740943">
        <id>P62760</id>
        <label>VSNL1</label>
    </interactant>
    <organismsDiffer>false</organismsDiffer>
    <experiments>10</experiments>
</comment>
<comment type="interaction">
    <interactant intactId="EBI-740376">
        <id>Q86UW9</id>
    </interactant>
    <interactant intactId="EBI-8832437">
        <id>Q96F45</id>
        <label>ZNF503</label>
    </interactant>
    <organismsDiffer>false</organismsDiffer>
    <experiments>3</experiments>
</comment>
<comment type="interaction">
    <interactant intactId="EBI-740376">
        <id>Q86UW9</id>
    </interactant>
    <interactant intactId="EBI-4395669">
        <id>Q6ZNG0</id>
        <label>ZNF620</label>
    </interactant>
    <organismsDiffer>false</organismsDiffer>
    <experiments>3</experiments>
</comment>
<comment type="interaction">
    <interactant intactId="EBI-740376">
        <id>Q86UW9</id>
    </interactant>
    <interactant intactId="EBI-745775">
        <id>Q96H86</id>
        <label>ZNF764</label>
    </interactant>
    <organismsDiffer>false</organismsDiffer>
    <experiments>3</experiments>
</comment>
<comment type="interaction">
    <interactant intactId="EBI-740376">
        <id>Q86UW9</id>
    </interactant>
    <interactant intactId="EBI-10251462">
        <id>Q6NX45</id>
        <label>ZNF774</label>
    </interactant>
    <organismsDiffer>false</organismsDiffer>
    <experiments>3</experiments>
</comment>
<comment type="interaction">
    <interactant intactId="EBI-740376">
        <id>Q86UW9</id>
    </interactant>
    <interactant intactId="EBI-18141506">
        <id>Q49A12</id>
        <label>ZNF85</label>
    </interactant>
    <organismsDiffer>false</organismsDiffer>
    <experiments>3</experiments>
</comment>
<comment type="subcellular location">
    <subcellularLocation>
        <location evidence="7">Cytoplasm</location>
    </subcellularLocation>
    <subcellularLocation>
        <location evidence="7">Nucleus</location>
    </subcellularLocation>
    <text evidence="7">Predominantly cytoplasmic. Partially nuclear.</text>
</comment>
<comment type="alternative products">
    <event type="alternative splicing"/>
    <isoform>
        <id>Q86UW9-1</id>
        <name>1</name>
        <name>A</name>
        <sequence type="displayed"/>
    </isoform>
    <isoform>
        <id>Q86UW9-2</id>
        <name>2</name>
        <name>B</name>
        <sequence type="described" ref="VSP_008350"/>
    </isoform>
</comment>
<comment type="domain">
    <text evidence="1">The WWE domains are thought to mediate some protein-protein interaction, and are frequently found in ubiquitin ligases.</text>
</comment>
<comment type="similarity">
    <text evidence="12">Belongs to the Deltex family.</text>
</comment>
<comment type="sequence caution" evidence="12">
    <conflict type="erroneous initiation">
        <sequence resource="EMBL-CDS" id="BAA96052"/>
    </conflict>
</comment>
<organism>
    <name type="scientific">Homo sapiens</name>
    <name type="common">Human</name>
    <dbReference type="NCBI Taxonomy" id="9606"/>
    <lineage>
        <taxon>Eukaryota</taxon>
        <taxon>Metazoa</taxon>
        <taxon>Chordata</taxon>
        <taxon>Craniata</taxon>
        <taxon>Vertebrata</taxon>
        <taxon>Euteleostomi</taxon>
        <taxon>Mammalia</taxon>
        <taxon>Eutheria</taxon>
        <taxon>Euarchontoglires</taxon>
        <taxon>Primates</taxon>
        <taxon>Haplorrhini</taxon>
        <taxon>Catarrhini</taxon>
        <taxon>Hominidae</taxon>
        <taxon>Homo</taxon>
    </lineage>
</organism>
<gene>
    <name type="primary">DTX2</name>
    <name type="synonym">KIAA1528</name>
    <name type="synonym">RNF58</name>
</gene>
<protein>
    <recommendedName>
        <fullName>Probable E3 ubiquitin-protein ligase DTX2</fullName>
        <ecNumber evidence="2">2.3.2.27</ecNumber>
    </recommendedName>
    <alternativeName>
        <fullName>Protein deltex-2</fullName>
        <shortName>Deltex2</shortName>
        <shortName>hDTX2</shortName>
    </alternativeName>
    <alternativeName>
        <fullName>RING finger protein 58</fullName>
    </alternativeName>
    <alternativeName>
        <fullName evidence="12">RING-type E3 ubiquitin transferase DTX2</fullName>
    </alternativeName>
</protein>
<dbReference type="EC" id="2.3.2.27" evidence="2"/>
<dbReference type="EMBL" id="AY225124">
    <property type="protein sequence ID" value="AAP57518.1"/>
    <property type="molecule type" value="mRNA"/>
</dbReference>
<dbReference type="EMBL" id="AY225125">
    <property type="protein sequence ID" value="AAP57519.1"/>
    <property type="molecule type" value="mRNA"/>
</dbReference>
<dbReference type="EMBL" id="DQ010329">
    <property type="protein sequence ID" value="AAY27263.1"/>
    <property type="molecule type" value="mRNA"/>
</dbReference>
<dbReference type="EMBL" id="AB040961">
    <property type="protein sequence ID" value="BAA96052.1"/>
    <property type="status" value="ALT_INIT"/>
    <property type="molecule type" value="mRNA"/>
</dbReference>
<dbReference type="EMBL" id="AK023924">
    <property type="protein sequence ID" value="BAB14727.1"/>
    <property type="molecule type" value="mRNA"/>
</dbReference>
<dbReference type="EMBL" id="AC005522">
    <property type="protein sequence ID" value="AAP21881.1"/>
    <property type="molecule type" value="Genomic_DNA"/>
</dbReference>
<dbReference type="EMBL" id="AC007078">
    <property type="status" value="NOT_ANNOTATED_CDS"/>
    <property type="molecule type" value="Genomic_DNA"/>
</dbReference>
<dbReference type="EMBL" id="BC008856">
    <property type="protein sequence ID" value="AAH08856.1"/>
    <property type="molecule type" value="mRNA"/>
</dbReference>
<dbReference type="EMBL" id="BC018555">
    <property type="protein sequence ID" value="AAH18555.1"/>
    <property type="molecule type" value="mRNA"/>
</dbReference>
<dbReference type="EMBL" id="BC026059">
    <property type="protein sequence ID" value="AAH26059.1"/>
    <property type="molecule type" value="mRNA"/>
</dbReference>
<dbReference type="EMBL" id="BC093079">
    <property type="protein sequence ID" value="AAH93079.1"/>
    <property type="molecule type" value="mRNA"/>
</dbReference>
<dbReference type="CCDS" id="CCDS43605.1">
    <molecule id="Q86UW9-2"/>
</dbReference>
<dbReference type="CCDS" id="CCDS5587.1">
    <molecule id="Q86UW9-1"/>
</dbReference>
<dbReference type="RefSeq" id="NP_001096064.1">
    <molecule id="Q86UW9-1"/>
    <property type="nucleotide sequence ID" value="NM_001102594.3"/>
</dbReference>
<dbReference type="RefSeq" id="NP_001096065.1">
    <molecule id="Q86UW9-1"/>
    <property type="nucleotide sequence ID" value="NM_001102595.3"/>
</dbReference>
<dbReference type="RefSeq" id="NP_001096066.1">
    <molecule id="Q86UW9-2"/>
    <property type="nucleotide sequence ID" value="NM_001102596.2"/>
</dbReference>
<dbReference type="RefSeq" id="NP_065943.2">
    <molecule id="Q86UW9-1"/>
    <property type="nucleotide sequence ID" value="NM_020892.4"/>
</dbReference>
<dbReference type="RefSeq" id="XP_005250188.1">
    <property type="nucleotide sequence ID" value="XM_005250131.1"/>
</dbReference>
<dbReference type="RefSeq" id="XP_005250189.1">
    <property type="nucleotide sequence ID" value="XM_005250132.1"/>
</dbReference>
<dbReference type="RefSeq" id="XP_011514074.1">
    <property type="nucleotide sequence ID" value="XM_011515772.1"/>
</dbReference>
<dbReference type="RefSeq" id="XP_011514075.1">
    <property type="nucleotide sequence ID" value="XM_011515773.2"/>
</dbReference>
<dbReference type="RefSeq" id="XP_011514076.1">
    <molecule id="Q86UW9-1"/>
    <property type="nucleotide sequence ID" value="XM_011515774.2"/>
</dbReference>
<dbReference type="RefSeq" id="XP_011514077.1">
    <property type="nucleotide sequence ID" value="XM_011515775.1"/>
</dbReference>
<dbReference type="RefSeq" id="XP_016867212.1">
    <property type="nucleotide sequence ID" value="XM_017011723.1"/>
</dbReference>
<dbReference type="RefSeq" id="XP_016867213.1">
    <molecule id="Q86UW9-1"/>
    <property type="nucleotide sequence ID" value="XM_017011724.2"/>
</dbReference>
<dbReference type="RefSeq" id="XP_016867214.1">
    <property type="nucleotide sequence ID" value="XM_017011725.1"/>
</dbReference>
<dbReference type="RefSeq" id="XP_016867215.1">
    <molecule id="Q86UW9-2"/>
    <property type="nucleotide sequence ID" value="XM_017011726.3"/>
</dbReference>
<dbReference type="RefSeq" id="XP_016867216.1">
    <property type="nucleotide sequence ID" value="XM_017011727.1"/>
</dbReference>
<dbReference type="RefSeq" id="XP_024302417.1">
    <molecule id="Q86UW9-1"/>
    <property type="nucleotide sequence ID" value="XM_024446649.2"/>
</dbReference>
<dbReference type="RefSeq" id="XP_047275808.1">
    <molecule id="Q86UW9-1"/>
    <property type="nucleotide sequence ID" value="XM_047419852.1"/>
</dbReference>
<dbReference type="RefSeq" id="XP_047275809.1">
    <molecule id="Q86UW9-1"/>
    <property type="nucleotide sequence ID" value="XM_047419853.1"/>
</dbReference>
<dbReference type="RefSeq" id="XP_047275810.1">
    <molecule id="Q86UW9-1"/>
    <property type="nucleotide sequence ID" value="XM_047419854.1"/>
</dbReference>
<dbReference type="RefSeq" id="XP_047275811.1">
    <molecule id="Q86UW9-1"/>
    <property type="nucleotide sequence ID" value="XM_047419855.1"/>
</dbReference>
<dbReference type="RefSeq" id="XP_047275812.1">
    <molecule id="Q86UW9-1"/>
    <property type="nucleotide sequence ID" value="XM_047419856.1"/>
</dbReference>
<dbReference type="RefSeq" id="XP_047275813.1">
    <molecule id="Q86UW9-1"/>
    <property type="nucleotide sequence ID" value="XM_047419857.1"/>
</dbReference>
<dbReference type="RefSeq" id="XP_047275814.1">
    <molecule id="Q86UW9-2"/>
    <property type="nucleotide sequence ID" value="XM_047419858.1"/>
</dbReference>
<dbReference type="RefSeq" id="XP_047275815.1">
    <molecule id="Q86UW9-2"/>
    <property type="nucleotide sequence ID" value="XM_047419859.1"/>
</dbReference>
<dbReference type="RefSeq" id="XP_047275817.1">
    <molecule id="Q86UW9-1"/>
    <property type="nucleotide sequence ID" value="XM_047419861.1"/>
</dbReference>
<dbReference type="PDB" id="6IR0">
    <property type="method" value="NMR"/>
    <property type="chains" value="A=399-474"/>
</dbReference>
<dbReference type="PDB" id="6Y22">
    <property type="method" value="X-ray"/>
    <property type="resolution" value="2.07 A"/>
    <property type="chains" value="A=390-622"/>
</dbReference>
<dbReference type="PDB" id="6Y2X">
    <property type="method" value="X-ray"/>
    <property type="resolution" value="1.77 A"/>
    <property type="chains" value="A/B=390-622"/>
</dbReference>
<dbReference type="PDB" id="6Y3J">
    <property type="method" value="X-ray"/>
    <property type="resolution" value="2.60 A"/>
    <property type="chains" value="A=390-622"/>
</dbReference>
<dbReference type="PDBsum" id="6IR0"/>
<dbReference type="PDBsum" id="6Y22"/>
<dbReference type="PDBsum" id="6Y2X"/>
<dbReference type="PDBsum" id="6Y3J"/>
<dbReference type="SMR" id="Q86UW9"/>
<dbReference type="BioGRID" id="125266">
    <property type="interactions" value="334"/>
</dbReference>
<dbReference type="FunCoup" id="Q86UW9">
    <property type="interactions" value="705"/>
</dbReference>
<dbReference type="IntAct" id="Q86UW9">
    <property type="interactions" value="124"/>
</dbReference>
<dbReference type="MINT" id="Q86UW9"/>
<dbReference type="STRING" id="9606.ENSP00000322885"/>
<dbReference type="GlyGen" id="Q86UW9">
    <property type="glycosylation" value="4 sites, 2 N-linked glycans (2 sites), 1 O-linked glycan (1 site)"/>
</dbReference>
<dbReference type="iPTMnet" id="Q86UW9"/>
<dbReference type="PhosphoSitePlus" id="Q86UW9"/>
<dbReference type="BioMuta" id="DTX2"/>
<dbReference type="DMDM" id="68067880"/>
<dbReference type="jPOST" id="Q86UW9"/>
<dbReference type="MassIVE" id="Q86UW9"/>
<dbReference type="PaxDb" id="9606-ENSP00000322885"/>
<dbReference type="PeptideAtlas" id="Q86UW9"/>
<dbReference type="ProteomicsDB" id="69923">
    <molecule id="Q86UW9-1"/>
</dbReference>
<dbReference type="ProteomicsDB" id="69924">
    <molecule id="Q86UW9-2"/>
</dbReference>
<dbReference type="Pumba" id="Q86UW9"/>
<dbReference type="Antibodypedia" id="35109">
    <property type="antibodies" value="193 antibodies from 31 providers"/>
</dbReference>
<dbReference type="DNASU" id="113878"/>
<dbReference type="Ensembl" id="ENST00000324432.9">
    <molecule id="Q86UW9-1"/>
    <property type="protein sequence ID" value="ENSP00000322885.5"/>
    <property type="gene ID" value="ENSG00000091073.20"/>
</dbReference>
<dbReference type="Ensembl" id="ENST00000413936.6">
    <molecule id="Q86UW9-1"/>
    <property type="protein sequence ID" value="ENSP00000390218.2"/>
    <property type="gene ID" value="ENSG00000091073.20"/>
</dbReference>
<dbReference type="Ensembl" id="ENST00000430490.7">
    <molecule id="Q86UW9-1"/>
    <property type="protein sequence ID" value="ENSP00000411986.2"/>
    <property type="gene ID" value="ENSG00000091073.20"/>
</dbReference>
<dbReference type="Ensembl" id="ENST00000446820.6">
    <molecule id="Q86UW9-2"/>
    <property type="protein sequence ID" value="ENSP00000392545.2"/>
    <property type="gene ID" value="ENSG00000091073.20"/>
</dbReference>
<dbReference type="GeneID" id="113878"/>
<dbReference type="KEGG" id="hsa:113878"/>
<dbReference type="MANE-Select" id="ENST00000430490.7">
    <property type="protein sequence ID" value="ENSP00000411986.2"/>
    <property type="RefSeq nucleotide sequence ID" value="NM_001102594.3"/>
    <property type="RefSeq protein sequence ID" value="NP_001096064.1"/>
</dbReference>
<dbReference type="UCSC" id="uc003uff.5">
    <molecule id="Q86UW9-1"/>
    <property type="organism name" value="human"/>
</dbReference>
<dbReference type="AGR" id="HGNC:15973"/>
<dbReference type="CTD" id="113878"/>
<dbReference type="DisGeNET" id="113878"/>
<dbReference type="GeneCards" id="DTX2"/>
<dbReference type="HGNC" id="HGNC:15973">
    <property type="gene designation" value="DTX2"/>
</dbReference>
<dbReference type="HPA" id="ENSG00000091073">
    <property type="expression patterns" value="Tissue enhanced (esophagus)"/>
</dbReference>
<dbReference type="MIM" id="613141">
    <property type="type" value="gene"/>
</dbReference>
<dbReference type="neXtProt" id="NX_Q86UW9"/>
<dbReference type="OpenTargets" id="ENSG00000091073"/>
<dbReference type="PharmGKB" id="PA27515"/>
<dbReference type="VEuPathDB" id="HostDB:ENSG00000091073"/>
<dbReference type="eggNOG" id="ENOG502QQ9M">
    <property type="taxonomic scope" value="Eukaryota"/>
</dbReference>
<dbReference type="GeneTree" id="ENSGT00940000157641"/>
<dbReference type="HOGENOM" id="CLU_030422_4_0_1"/>
<dbReference type="InParanoid" id="Q86UW9"/>
<dbReference type="OMA" id="ICMEQLS"/>
<dbReference type="OrthoDB" id="2449614at2759"/>
<dbReference type="PAN-GO" id="Q86UW9">
    <property type="GO annotations" value="4 GO annotations based on evolutionary models"/>
</dbReference>
<dbReference type="PhylomeDB" id="Q86UW9"/>
<dbReference type="PathwayCommons" id="Q86UW9"/>
<dbReference type="Reactome" id="R-HSA-2122948">
    <property type="pathway name" value="Activated NOTCH1 Transmits Signal to the Nucleus"/>
</dbReference>
<dbReference type="SignaLink" id="Q86UW9"/>
<dbReference type="SIGNOR" id="Q86UW9"/>
<dbReference type="UniPathway" id="UPA00143"/>
<dbReference type="BioGRID-ORCS" id="113878">
    <property type="hits" value="35 hits in 1197 CRISPR screens"/>
</dbReference>
<dbReference type="ChiTaRS" id="DTX2">
    <property type="organism name" value="human"/>
</dbReference>
<dbReference type="GeneWiki" id="DTX2"/>
<dbReference type="GenomeRNAi" id="113878"/>
<dbReference type="Pharos" id="Q86UW9">
    <property type="development level" value="Tbio"/>
</dbReference>
<dbReference type="PRO" id="PR:Q86UW9"/>
<dbReference type="Proteomes" id="UP000005640">
    <property type="component" value="Chromosome 7"/>
</dbReference>
<dbReference type="RNAct" id="Q86UW9">
    <property type="molecule type" value="protein"/>
</dbReference>
<dbReference type="Bgee" id="ENSG00000091073">
    <property type="expression patterns" value="Expressed in lower esophagus mucosa and 96 other cell types or tissues"/>
</dbReference>
<dbReference type="ExpressionAtlas" id="Q86UW9">
    <property type="expression patterns" value="baseline and differential"/>
</dbReference>
<dbReference type="GO" id="GO:0005737">
    <property type="term" value="C:cytoplasm"/>
    <property type="evidence" value="ECO:0007669"/>
    <property type="project" value="UniProtKB-SubCell"/>
</dbReference>
<dbReference type="GO" id="GO:0031965">
    <property type="term" value="C:nuclear membrane"/>
    <property type="evidence" value="ECO:0000314"/>
    <property type="project" value="HPA"/>
</dbReference>
<dbReference type="GO" id="GO:0005654">
    <property type="term" value="C:nucleoplasm"/>
    <property type="evidence" value="ECO:0000314"/>
    <property type="project" value="HPA"/>
</dbReference>
<dbReference type="GO" id="GO:0061630">
    <property type="term" value="F:ubiquitin protein ligase activity"/>
    <property type="evidence" value="ECO:0000318"/>
    <property type="project" value="GO_Central"/>
</dbReference>
<dbReference type="GO" id="GO:0008270">
    <property type="term" value="F:zinc ion binding"/>
    <property type="evidence" value="ECO:0007669"/>
    <property type="project" value="UniProtKB-KW"/>
</dbReference>
<dbReference type="GO" id="GO:0007219">
    <property type="term" value="P:Notch signaling pathway"/>
    <property type="evidence" value="ECO:0000318"/>
    <property type="project" value="GO_Central"/>
</dbReference>
<dbReference type="GO" id="GO:0016567">
    <property type="term" value="P:protein ubiquitination"/>
    <property type="evidence" value="ECO:0000318"/>
    <property type="project" value="GO_Central"/>
</dbReference>
<dbReference type="CDD" id="cd09633">
    <property type="entry name" value="Deltex_C"/>
    <property type="match status" value="1"/>
</dbReference>
<dbReference type="CDD" id="cd16672">
    <property type="entry name" value="RING-H2_DTX2"/>
    <property type="match status" value="1"/>
</dbReference>
<dbReference type="FunFam" id="3.30.40.10:FF:000097">
    <property type="entry name" value="E3 ubiquitin-protein ligase DTX4"/>
    <property type="match status" value="1"/>
</dbReference>
<dbReference type="FunFam" id="3.30.720.50:FF:000004">
    <property type="entry name" value="Probable E3 ubiquitin-protein ligase DTX2"/>
    <property type="match status" value="1"/>
</dbReference>
<dbReference type="FunFam" id="3.30.720.50:FF:000005">
    <property type="entry name" value="Probable E3 ubiquitin-protein ligase DTX2"/>
    <property type="match status" value="1"/>
</dbReference>
<dbReference type="FunFam" id="3.30.390.130:FF:000001">
    <property type="entry name" value="Probable E3 ubiquitin-protein ligase DTX3"/>
    <property type="match status" value="1"/>
</dbReference>
<dbReference type="Gene3D" id="3.30.390.130">
    <property type="match status" value="1"/>
</dbReference>
<dbReference type="Gene3D" id="3.30.720.50">
    <property type="match status" value="2"/>
</dbReference>
<dbReference type="Gene3D" id="3.30.40.10">
    <property type="entry name" value="Zinc/RING finger domain, C3HC4 (zinc finger)"/>
    <property type="match status" value="1"/>
</dbReference>
<dbReference type="InterPro" id="IPR039396">
    <property type="entry name" value="Deltex_C"/>
</dbReference>
<dbReference type="InterPro" id="IPR039399">
    <property type="entry name" value="Deltex_C_sf"/>
</dbReference>
<dbReference type="InterPro" id="IPR039398">
    <property type="entry name" value="Deltex_fam"/>
</dbReference>
<dbReference type="InterPro" id="IPR018123">
    <property type="entry name" value="WWE-dom_subgr"/>
</dbReference>
<dbReference type="InterPro" id="IPR004170">
    <property type="entry name" value="WWE_dom"/>
</dbReference>
<dbReference type="InterPro" id="IPR037197">
    <property type="entry name" value="WWE_dom_sf"/>
</dbReference>
<dbReference type="InterPro" id="IPR001841">
    <property type="entry name" value="Znf_RING"/>
</dbReference>
<dbReference type="InterPro" id="IPR013083">
    <property type="entry name" value="Znf_RING/FYVE/PHD"/>
</dbReference>
<dbReference type="PANTHER" id="PTHR12622">
    <property type="entry name" value="DELTEX-RELATED"/>
    <property type="match status" value="1"/>
</dbReference>
<dbReference type="Pfam" id="PF18102">
    <property type="entry name" value="DTC"/>
    <property type="match status" value="1"/>
</dbReference>
<dbReference type="Pfam" id="PF02825">
    <property type="entry name" value="WWE"/>
    <property type="match status" value="2"/>
</dbReference>
<dbReference type="SMART" id="SM00184">
    <property type="entry name" value="RING"/>
    <property type="match status" value="1"/>
</dbReference>
<dbReference type="SMART" id="SM00678">
    <property type="entry name" value="WWE"/>
    <property type="match status" value="2"/>
</dbReference>
<dbReference type="SUPFAM" id="SSF57850">
    <property type="entry name" value="RING/U-box"/>
    <property type="match status" value="1"/>
</dbReference>
<dbReference type="SUPFAM" id="SSF117839">
    <property type="entry name" value="WWE domain"/>
    <property type="match status" value="2"/>
</dbReference>
<dbReference type="PROSITE" id="PS50918">
    <property type="entry name" value="WWE"/>
    <property type="match status" value="2"/>
</dbReference>
<dbReference type="PROSITE" id="PS50089">
    <property type="entry name" value="ZF_RING_2"/>
    <property type="match status" value="1"/>
</dbReference>
<accession>Q86UW9</accession>
<accession>Q4ZH49</accession>
<accession>Q6XM87</accession>
<accession>Q6XM88</accession>
<accession>Q96H69</accession>
<accession>Q9H890</accession>
<accession>Q9P200</accession>
<proteinExistence type="evidence at protein level"/>
<name>DTX2_HUMAN</name>
<sequence length="622" mass="67246">MAMAPSPSLVQVYTSPAAVAVWEWQDGLGTWHPYSATVCSFIEQQFVQQKGQRFGLGSLAHSIPLGQADPSLAPYIIDLPSWTQFRQDTGTMRAVRRHLFPQHSAPGRGVVWEWLSDDGSWTAYEASVCDYLEQQVARGNQLVDLAPLGYNYTVNYTTHTQTNKTSSFCRSVRRQAGPPYPVTTIIAPPGHTGVACSCHQCLSGSRTGPVSGRYRHSMTNLPAYPVPQHPPHRTASVFGTHQAFAPYNKPSLSGARSAPRLNTTNAWGAAPPSLGSQPLYRSSLSHLGPQHLPPGSSTSGAVSASLPSGPSSSPGSVPATVPMQMPKPSRVQQALAGMTSVLMSAIGLPVCLSRAPQPTSPPASRLASKSHGSVKRLRKMSVKGATPKPEPEPEQVIKNYTEELKVPPDEDCIICMEKLSTASGYSDVTDSKAIGSLAVGHLTKCSHAFHLLCLLAMYCNGNKDGSLQCPSCKTIYGEKTGTQPQGKMEVLRFQMSLPGHEDCGTILIVYSIPHGIQGPEHPNPGKPFTARGFPRQCYLPDNAQGRKVLELLKVAWKRRLIFTVGTSSTTGETDTVVWNEIHHKTEMDRNITGHGYPDPNYLQNVLAELAAQGVTEDCLEQQ</sequence>
<evidence type="ECO:0000250" key="1"/>
<evidence type="ECO:0000250" key="2">
    <source>
        <dbReference type="UniProtKB" id="Q61010"/>
    </source>
</evidence>
<evidence type="ECO:0000255" key="3">
    <source>
        <dbReference type="PROSITE-ProRule" id="PRU00175"/>
    </source>
</evidence>
<evidence type="ECO:0000255" key="4">
    <source>
        <dbReference type="PROSITE-ProRule" id="PRU00248"/>
    </source>
</evidence>
<evidence type="ECO:0000256" key="5">
    <source>
        <dbReference type="SAM" id="MobiDB-lite"/>
    </source>
</evidence>
<evidence type="ECO:0000269" key="6">
    <source>
    </source>
</evidence>
<evidence type="ECO:0000269" key="7">
    <source>
    </source>
</evidence>
<evidence type="ECO:0000269" key="8">
    <source>
    </source>
</evidence>
<evidence type="ECO:0000269" key="9">
    <source>
    </source>
</evidence>
<evidence type="ECO:0000269" key="10">
    <source>
    </source>
</evidence>
<evidence type="ECO:0000269" key="11">
    <source ref="2"/>
</evidence>
<evidence type="ECO:0000305" key="12"/>
<evidence type="ECO:0007744" key="13">
    <source>
    </source>
</evidence>
<evidence type="ECO:0007744" key="14">
    <source>
    </source>
</evidence>
<evidence type="ECO:0007744" key="15">
    <source>
    </source>
</evidence>
<evidence type="ECO:0007829" key="16">
    <source>
        <dbReference type="PDB" id="6IR0"/>
    </source>
</evidence>
<evidence type="ECO:0007829" key="17">
    <source>
        <dbReference type="PDB" id="6Y22"/>
    </source>
</evidence>
<evidence type="ECO:0007829" key="18">
    <source>
        <dbReference type="PDB" id="6Y2X"/>
    </source>
</evidence>
<reference key="1">
    <citation type="journal article" date="2003" name="J. Biol. Chem.">
        <title>The BAL-binding protein BBAP and related Deltex family members exhibit ubiquitin-protein isopeptide ligase activity.</title>
        <authorList>
            <person name="Takeyama K."/>
            <person name="Aguiar R.C.T."/>
            <person name="Gu L."/>
            <person name="He C."/>
            <person name="Freeman G.J."/>
            <person name="Kutok J.L."/>
            <person name="Aster J.C."/>
            <person name="Shipp M.A."/>
        </authorList>
    </citation>
    <scope>NUCLEOTIDE SEQUENCE [MRNA]</scope>
    <scope>ALTERNATIVE SPLICING (ISOFORMS 1 AND 2)</scope>
    <scope>VARIANT GLU-384</scope>
    <scope>SUBUNIT</scope>
    <scope>IN VITRO UBIQUITIN LIGASE ACTIVITY</scope>
</reference>
<reference key="2">
    <citation type="journal article" date="2006" name="DNA Seq.">
        <title>cDNA cloning, characterization and expression analysis of DTX2, a human WWE and RING-finger gene, in human embryos.</title>
        <authorList>
            <person name="Yi Z."/>
            <person name="Yi T."/>
            <person name="Wu Z."/>
        </authorList>
    </citation>
    <scope>NUCLEOTIDE SEQUENCE [MRNA]</scope>
    <scope>VARIANT ALA-421</scope>
</reference>
<reference key="3">
    <citation type="journal article" date="2000" name="DNA Res.">
        <title>Prediction of the coding sequences of unidentified human genes. XVII. The complete sequences of 100 new cDNA clones from brain which code for large proteins in vitro.</title>
        <authorList>
            <person name="Nagase T."/>
            <person name="Kikuno R."/>
            <person name="Ishikawa K."/>
            <person name="Hirosawa M."/>
            <person name="Ohara O."/>
        </authorList>
    </citation>
    <scope>NUCLEOTIDE SEQUENCE [LARGE SCALE MRNA] (ISOFORM 1)</scope>
    <scope>VARIANTS GLU-384 AND ALA-421</scope>
    <source>
        <tissue>Brain</tissue>
    </source>
</reference>
<reference key="4">
    <citation type="journal article" date="2004" name="Nat. Genet.">
        <title>Complete sequencing and characterization of 21,243 full-length human cDNAs.</title>
        <authorList>
            <person name="Ota T."/>
            <person name="Suzuki Y."/>
            <person name="Nishikawa T."/>
            <person name="Otsuki T."/>
            <person name="Sugiyama T."/>
            <person name="Irie R."/>
            <person name="Wakamatsu A."/>
            <person name="Hayashi K."/>
            <person name="Sato H."/>
            <person name="Nagai K."/>
            <person name="Kimura K."/>
            <person name="Makita H."/>
            <person name="Sekine M."/>
            <person name="Obayashi M."/>
            <person name="Nishi T."/>
            <person name="Shibahara T."/>
            <person name="Tanaka T."/>
            <person name="Ishii S."/>
            <person name="Yamamoto J."/>
            <person name="Saito K."/>
            <person name="Kawai Y."/>
            <person name="Isono Y."/>
            <person name="Nakamura Y."/>
            <person name="Nagahari K."/>
            <person name="Murakami K."/>
            <person name="Yasuda T."/>
            <person name="Iwayanagi T."/>
            <person name="Wagatsuma M."/>
            <person name="Shiratori A."/>
            <person name="Sudo H."/>
            <person name="Hosoiri T."/>
            <person name="Kaku Y."/>
            <person name="Kodaira H."/>
            <person name="Kondo H."/>
            <person name="Sugawara M."/>
            <person name="Takahashi M."/>
            <person name="Kanda K."/>
            <person name="Yokoi T."/>
            <person name="Furuya T."/>
            <person name="Kikkawa E."/>
            <person name="Omura Y."/>
            <person name="Abe K."/>
            <person name="Kamihara K."/>
            <person name="Katsuta N."/>
            <person name="Sato K."/>
            <person name="Tanikawa M."/>
            <person name="Yamazaki M."/>
            <person name="Ninomiya K."/>
            <person name="Ishibashi T."/>
            <person name="Yamashita H."/>
            <person name="Murakawa K."/>
            <person name="Fujimori K."/>
            <person name="Tanai H."/>
            <person name="Kimata M."/>
            <person name="Watanabe M."/>
            <person name="Hiraoka S."/>
            <person name="Chiba Y."/>
            <person name="Ishida S."/>
            <person name="Ono Y."/>
            <person name="Takiguchi S."/>
            <person name="Watanabe S."/>
            <person name="Yosida M."/>
            <person name="Hotuta T."/>
            <person name="Kusano J."/>
            <person name="Kanehori K."/>
            <person name="Takahashi-Fujii A."/>
            <person name="Hara H."/>
            <person name="Tanase T.-O."/>
            <person name="Nomura Y."/>
            <person name="Togiya S."/>
            <person name="Komai F."/>
            <person name="Hara R."/>
            <person name="Takeuchi K."/>
            <person name="Arita M."/>
            <person name="Imose N."/>
            <person name="Musashino K."/>
            <person name="Yuuki H."/>
            <person name="Oshima A."/>
            <person name="Sasaki N."/>
            <person name="Aotsuka S."/>
            <person name="Yoshikawa Y."/>
            <person name="Matsunawa H."/>
            <person name="Ichihara T."/>
            <person name="Shiohata N."/>
            <person name="Sano S."/>
            <person name="Moriya S."/>
            <person name="Momiyama H."/>
            <person name="Satoh N."/>
            <person name="Takami S."/>
            <person name="Terashima Y."/>
            <person name="Suzuki O."/>
            <person name="Nakagawa S."/>
            <person name="Senoh A."/>
            <person name="Mizoguchi H."/>
            <person name="Goto Y."/>
            <person name="Shimizu F."/>
            <person name="Wakebe H."/>
            <person name="Hishigaki H."/>
            <person name="Watanabe T."/>
            <person name="Sugiyama A."/>
            <person name="Takemoto M."/>
            <person name="Kawakami B."/>
            <person name="Yamazaki M."/>
            <person name="Watanabe K."/>
            <person name="Kumagai A."/>
            <person name="Itakura S."/>
            <person name="Fukuzumi Y."/>
            <person name="Fujimori Y."/>
            <person name="Komiyama M."/>
            <person name="Tashiro H."/>
            <person name="Tanigami A."/>
            <person name="Fujiwara T."/>
            <person name="Ono T."/>
            <person name="Yamada K."/>
            <person name="Fujii Y."/>
            <person name="Ozaki K."/>
            <person name="Hirao M."/>
            <person name="Ohmori Y."/>
            <person name="Kawabata A."/>
            <person name="Hikiji T."/>
            <person name="Kobatake N."/>
            <person name="Inagaki H."/>
            <person name="Ikema Y."/>
            <person name="Okamoto S."/>
            <person name="Okitani R."/>
            <person name="Kawakami T."/>
            <person name="Noguchi S."/>
            <person name="Itoh T."/>
            <person name="Shigeta K."/>
            <person name="Senba T."/>
            <person name="Matsumura K."/>
            <person name="Nakajima Y."/>
            <person name="Mizuno T."/>
            <person name="Morinaga M."/>
            <person name="Sasaki M."/>
            <person name="Togashi T."/>
            <person name="Oyama M."/>
            <person name="Hata H."/>
            <person name="Watanabe M."/>
            <person name="Komatsu T."/>
            <person name="Mizushima-Sugano J."/>
            <person name="Satoh T."/>
            <person name="Shirai Y."/>
            <person name="Takahashi Y."/>
            <person name="Nakagawa K."/>
            <person name="Okumura K."/>
            <person name="Nagase T."/>
            <person name="Nomura N."/>
            <person name="Kikuchi H."/>
            <person name="Masuho Y."/>
            <person name="Yamashita R."/>
            <person name="Nakai K."/>
            <person name="Yada T."/>
            <person name="Nakamura Y."/>
            <person name="Ohara O."/>
            <person name="Isogai T."/>
            <person name="Sugano S."/>
        </authorList>
    </citation>
    <scope>NUCLEOTIDE SEQUENCE [LARGE SCALE MRNA] (ISOFORM 1)</scope>
    <scope>VARIANT ALA-421</scope>
    <source>
        <tissue>Thyroid</tissue>
    </source>
</reference>
<reference key="5">
    <citation type="journal article" date="2003" name="Nature">
        <title>The DNA sequence of human chromosome 7.</title>
        <authorList>
            <person name="Hillier L.W."/>
            <person name="Fulton R.S."/>
            <person name="Fulton L.A."/>
            <person name="Graves T.A."/>
            <person name="Pepin K.H."/>
            <person name="Wagner-McPherson C."/>
            <person name="Layman D."/>
            <person name="Maas J."/>
            <person name="Jaeger S."/>
            <person name="Walker R."/>
            <person name="Wylie K."/>
            <person name="Sekhon M."/>
            <person name="Becker M.C."/>
            <person name="O'Laughlin M.D."/>
            <person name="Schaller M.E."/>
            <person name="Fewell G.A."/>
            <person name="Delehaunty K.D."/>
            <person name="Miner T.L."/>
            <person name="Nash W.E."/>
            <person name="Cordes M."/>
            <person name="Du H."/>
            <person name="Sun H."/>
            <person name="Edwards J."/>
            <person name="Bradshaw-Cordum H."/>
            <person name="Ali J."/>
            <person name="Andrews S."/>
            <person name="Isak A."/>
            <person name="Vanbrunt A."/>
            <person name="Nguyen C."/>
            <person name="Du F."/>
            <person name="Lamar B."/>
            <person name="Courtney L."/>
            <person name="Kalicki J."/>
            <person name="Ozersky P."/>
            <person name="Bielicki L."/>
            <person name="Scott K."/>
            <person name="Holmes A."/>
            <person name="Harkins R."/>
            <person name="Harris A."/>
            <person name="Strong C.M."/>
            <person name="Hou S."/>
            <person name="Tomlinson C."/>
            <person name="Dauphin-Kohlberg S."/>
            <person name="Kozlowicz-Reilly A."/>
            <person name="Leonard S."/>
            <person name="Rohlfing T."/>
            <person name="Rock S.M."/>
            <person name="Tin-Wollam A.-M."/>
            <person name="Abbott A."/>
            <person name="Minx P."/>
            <person name="Maupin R."/>
            <person name="Strowmatt C."/>
            <person name="Latreille P."/>
            <person name="Miller N."/>
            <person name="Johnson D."/>
            <person name="Murray J."/>
            <person name="Woessner J.P."/>
            <person name="Wendl M.C."/>
            <person name="Yang S.-P."/>
            <person name="Schultz B.R."/>
            <person name="Wallis J.W."/>
            <person name="Spieth J."/>
            <person name="Bieri T.A."/>
            <person name="Nelson J.O."/>
            <person name="Berkowicz N."/>
            <person name="Wohldmann P.E."/>
            <person name="Cook L.L."/>
            <person name="Hickenbotham M.T."/>
            <person name="Eldred J."/>
            <person name="Williams D."/>
            <person name="Bedell J.A."/>
            <person name="Mardis E.R."/>
            <person name="Clifton S.W."/>
            <person name="Chissoe S.L."/>
            <person name="Marra M.A."/>
            <person name="Raymond C."/>
            <person name="Haugen E."/>
            <person name="Gillett W."/>
            <person name="Zhou Y."/>
            <person name="James R."/>
            <person name="Phelps K."/>
            <person name="Iadanoto S."/>
            <person name="Bubb K."/>
            <person name="Simms E."/>
            <person name="Levy R."/>
            <person name="Clendenning J."/>
            <person name="Kaul R."/>
            <person name="Kent W.J."/>
            <person name="Furey T.S."/>
            <person name="Baertsch R.A."/>
            <person name="Brent M.R."/>
            <person name="Keibler E."/>
            <person name="Flicek P."/>
            <person name="Bork P."/>
            <person name="Suyama M."/>
            <person name="Bailey J.A."/>
            <person name="Portnoy M.E."/>
            <person name="Torrents D."/>
            <person name="Chinwalla A.T."/>
            <person name="Gish W.R."/>
            <person name="Eddy S.R."/>
            <person name="McPherson J.D."/>
            <person name="Olson M.V."/>
            <person name="Eichler E.E."/>
            <person name="Green E.D."/>
            <person name="Waterston R.H."/>
            <person name="Wilson R.K."/>
        </authorList>
    </citation>
    <scope>NUCLEOTIDE SEQUENCE [LARGE SCALE GENOMIC DNA]</scope>
</reference>
<reference key="6">
    <citation type="journal article" date="2004" name="Genome Res.">
        <title>The status, quality, and expansion of the NIH full-length cDNA project: the Mammalian Gene Collection (MGC).</title>
        <authorList>
            <consortium name="The MGC Project Team"/>
        </authorList>
    </citation>
    <scope>NUCLEOTIDE SEQUENCE [LARGE SCALE MRNA] (ISOFORM 1)</scope>
    <scope>VARIANT GLU-384</scope>
    <source>
        <tissue>Brain</tissue>
        <tissue>Lymph</tissue>
        <tissue>Muscle</tissue>
    </source>
</reference>
<reference key="7">
    <citation type="journal article" date="2001" name="J. Biol. Chem.">
        <title>Role of Deltex-1 as a transcriptional regulator downstream of the Notch receptor.</title>
        <authorList>
            <person name="Yamamoto N."/>
            <person name="Yamamoto S."/>
            <person name="Inagaki F."/>
            <person name="Kawaichi M."/>
            <person name="Fukamizu A."/>
            <person name="Kishi N."/>
            <person name="Matsuno K."/>
            <person name="Nakamura K."/>
            <person name="Weinmaster G."/>
            <person name="Okano H."/>
            <person name="Nakafuku M."/>
        </authorList>
    </citation>
    <scope>SUBCELLULAR LOCATION</scope>
</reference>
<reference key="8">
    <citation type="journal article" date="2008" name="Proc. Natl. Acad. Sci. U.S.A.">
        <title>A quantitative atlas of mitotic phosphorylation.</title>
        <authorList>
            <person name="Dephoure N."/>
            <person name="Zhou C."/>
            <person name="Villen J."/>
            <person name="Beausoleil S.A."/>
            <person name="Bakalarski C.E."/>
            <person name="Elledge S.J."/>
            <person name="Gygi S.P."/>
        </authorList>
    </citation>
    <scope>PHOSPHORYLATION [LARGE SCALE ANALYSIS] AT SER-360</scope>
    <scope>IDENTIFICATION BY MASS SPECTROMETRY [LARGE SCALE ANALYSIS]</scope>
    <source>
        <tissue>Cervix carcinoma</tissue>
    </source>
</reference>
<reference key="9">
    <citation type="journal article" date="2009" name="Science">
        <title>Lysine acetylation targets protein complexes and co-regulates major cellular functions.</title>
        <authorList>
            <person name="Choudhary C."/>
            <person name="Kumar C."/>
            <person name="Gnad F."/>
            <person name="Nielsen M.L."/>
            <person name="Rehman M."/>
            <person name="Walther T.C."/>
            <person name="Olsen J.V."/>
            <person name="Mann M."/>
        </authorList>
    </citation>
    <scope>ACETYLATION [LARGE SCALE ANALYSIS] AT LYS-249</scope>
    <scope>IDENTIFICATION BY MASS SPECTROMETRY [LARGE SCALE ANALYSIS]</scope>
</reference>
<reference key="10">
    <citation type="journal article" date="2013" name="J. Proteome Res.">
        <title>Toward a comprehensive characterization of a human cancer cell phosphoproteome.</title>
        <authorList>
            <person name="Zhou H."/>
            <person name="Di Palma S."/>
            <person name="Preisinger C."/>
            <person name="Peng M."/>
            <person name="Polat A.N."/>
            <person name="Heck A.J."/>
            <person name="Mohammed S."/>
        </authorList>
    </citation>
    <scope>IDENTIFICATION BY MASS SPECTROMETRY [LARGE SCALE ANALYSIS]</scope>
    <source>
        <tissue>Erythroleukemia</tissue>
    </source>
</reference>
<reference key="11">
    <citation type="journal article" date="2014" name="Mol. Cell. Proteomics">
        <title>Immunoaffinity enrichment and mass spectrometry analysis of protein methylation.</title>
        <authorList>
            <person name="Guo A."/>
            <person name="Gu H."/>
            <person name="Zhou J."/>
            <person name="Mulhern D."/>
            <person name="Wang Y."/>
            <person name="Lee K.A."/>
            <person name="Yang V."/>
            <person name="Aguiar M."/>
            <person name="Kornhauser J."/>
            <person name="Jia X."/>
            <person name="Ren J."/>
            <person name="Beausoleil S.A."/>
            <person name="Silva J.C."/>
            <person name="Vemulapalli V."/>
            <person name="Bedford M.T."/>
            <person name="Comb M.J."/>
        </authorList>
    </citation>
    <scope>METHYLATION [LARGE SCALE ANALYSIS] AT ARG-213; ARG-215; ARG-233 AND ARG-256</scope>
    <scope>IDENTIFICATION BY MASS SPECTROMETRY [LARGE SCALE ANALYSIS]</scope>
    <source>
        <tissue>Colon carcinoma</tissue>
    </source>
</reference>